<comment type="PTM">
    <text evidence="1">Processing of the polyproteins proceeds by an ordered pathway, called maturation. It involves the initial cleavage of a 27 kDa capsid protein (CA) from the N-terminus of the polyprotein, followed by the cleavage of a 56 kDa integrase (IN) from the C-terminus. This leaves a 72 kDa protease-reverse transcriptase fusion protein (PR-RT), which does not seem to be processed further (By similarity).</text>
</comment>
<comment type="miscellaneous">
    <text>Retrotransposons are mobile genetic entities that are able to replicate via an RNA intermediate and a reverse transcription step. In contrast to retroviruses, retrotransposons are non-infectious, lack an envelope and remain intracellular. Tf2 retrotransposons belong to the gypsy-like elements (metaviridae).</text>
</comment>
<reference key="1">
    <citation type="journal article" date="2002" name="Nature">
        <title>The genome sequence of Schizosaccharomyces pombe.</title>
        <authorList>
            <person name="Wood V."/>
            <person name="Gwilliam R."/>
            <person name="Rajandream M.A."/>
            <person name="Lyne M.H."/>
            <person name="Lyne R."/>
            <person name="Stewart A."/>
            <person name="Sgouros J.G."/>
            <person name="Peat N."/>
            <person name="Hayles J."/>
            <person name="Baker S.G."/>
            <person name="Basham D."/>
            <person name="Bowman S."/>
            <person name="Brooks K."/>
            <person name="Brown D."/>
            <person name="Brown S."/>
            <person name="Chillingworth T."/>
            <person name="Churcher C.M."/>
            <person name="Collins M."/>
            <person name="Connor R."/>
            <person name="Cronin A."/>
            <person name="Davis P."/>
            <person name="Feltwell T."/>
            <person name="Fraser A."/>
            <person name="Gentles S."/>
            <person name="Goble A."/>
            <person name="Hamlin N."/>
            <person name="Harris D.E."/>
            <person name="Hidalgo J."/>
            <person name="Hodgson G."/>
            <person name="Holroyd S."/>
            <person name="Hornsby T."/>
            <person name="Howarth S."/>
            <person name="Huckle E.J."/>
            <person name="Hunt S."/>
            <person name="Jagels K."/>
            <person name="James K.D."/>
            <person name="Jones L."/>
            <person name="Jones M."/>
            <person name="Leather S."/>
            <person name="McDonald S."/>
            <person name="McLean J."/>
            <person name="Mooney P."/>
            <person name="Moule S."/>
            <person name="Mungall K.L."/>
            <person name="Murphy L.D."/>
            <person name="Niblett D."/>
            <person name="Odell C."/>
            <person name="Oliver K."/>
            <person name="O'Neil S."/>
            <person name="Pearson D."/>
            <person name="Quail M.A."/>
            <person name="Rabbinowitsch E."/>
            <person name="Rutherford K.M."/>
            <person name="Rutter S."/>
            <person name="Saunders D."/>
            <person name="Seeger K."/>
            <person name="Sharp S."/>
            <person name="Skelton J."/>
            <person name="Simmonds M.N."/>
            <person name="Squares R."/>
            <person name="Squares S."/>
            <person name="Stevens K."/>
            <person name="Taylor K."/>
            <person name="Taylor R.G."/>
            <person name="Tivey A."/>
            <person name="Walsh S.V."/>
            <person name="Warren T."/>
            <person name="Whitehead S."/>
            <person name="Woodward J.R."/>
            <person name="Volckaert G."/>
            <person name="Aert R."/>
            <person name="Robben J."/>
            <person name="Grymonprez B."/>
            <person name="Weltjens I."/>
            <person name="Vanstreels E."/>
            <person name="Rieger M."/>
            <person name="Schaefer M."/>
            <person name="Mueller-Auer S."/>
            <person name="Gabel C."/>
            <person name="Fuchs M."/>
            <person name="Duesterhoeft A."/>
            <person name="Fritzc C."/>
            <person name="Holzer E."/>
            <person name="Moestl D."/>
            <person name="Hilbert H."/>
            <person name="Borzym K."/>
            <person name="Langer I."/>
            <person name="Beck A."/>
            <person name="Lehrach H."/>
            <person name="Reinhardt R."/>
            <person name="Pohl T.M."/>
            <person name="Eger P."/>
            <person name="Zimmermann W."/>
            <person name="Wedler H."/>
            <person name="Wambutt R."/>
            <person name="Purnelle B."/>
            <person name="Goffeau A."/>
            <person name="Cadieu E."/>
            <person name="Dreano S."/>
            <person name="Gloux S."/>
            <person name="Lelaure V."/>
            <person name="Mottier S."/>
            <person name="Galibert F."/>
            <person name="Aves S.J."/>
            <person name="Xiang Z."/>
            <person name="Hunt C."/>
            <person name="Moore K."/>
            <person name="Hurst S.M."/>
            <person name="Lucas M."/>
            <person name="Rochet M."/>
            <person name="Gaillardin C."/>
            <person name="Tallada V.A."/>
            <person name="Garzon A."/>
            <person name="Thode G."/>
            <person name="Daga R.R."/>
            <person name="Cruzado L."/>
            <person name="Jimenez J."/>
            <person name="Sanchez M."/>
            <person name="del Rey F."/>
            <person name="Benito J."/>
            <person name="Dominguez A."/>
            <person name="Revuelta J.L."/>
            <person name="Moreno S."/>
            <person name="Armstrong J."/>
            <person name="Forsburg S.L."/>
            <person name="Cerutti L."/>
            <person name="Lowe T."/>
            <person name="McCombie W.R."/>
            <person name="Paulsen I."/>
            <person name="Potashkin J."/>
            <person name="Shpakovski G.V."/>
            <person name="Ussery D."/>
            <person name="Barrell B.G."/>
            <person name="Nurse P."/>
        </authorList>
    </citation>
    <scope>NUCLEOTIDE SEQUENCE [LARGE SCALE GENOMIC DNA]</scope>
    <source>
        <strain>972 / ATCC 24843</strain>
    </source>
</reference>
<reference key="2">
    <citation type="journal article" date="2003" name="Genome Res.">
        <title>Retrotransposons and their recognition of pol II promoters: a comprehensive survey of the transposable elements from the complete genome sequence of Schizosaccharomyces pombe.</title>
        <authorList>
            <person name="Bowen N.J."/>
            <person name="Jordan I.K."/>
            <person name="Epstein J.A."/>
            <person name="Wood V."/>
            <person name="Levin H.L."/>
        </authorList>
    </citation>
    <scope>NOMENCLATURE</scope>
</reference>
<sequence>MSYANYRYMKARAKRWRPENLDGIQTSDEHLINLFAKILSKHVPEIGKFDPNKDVESYISKLDQHFTEYPSLFPNEHTKRQYTLNHLEELEQQFAERMFSENGSLTWQELLRQTGKVQGSNKGDRLTKTFEGFRNQLDKVQFIRKLMSKANVDDFHTRLFILWMLPYSLRKLKERNYWKSEISEIYDFLEDKRTASYGKTHKRFQLQNKNLGKESLSKKNNTTNSRNLRKTNVSRIEYSSNKFLNHTRKRYEMVLQAELPDFKCSIPCLIDTGAQANIITEETVRAHKLPTRPWSKSVIYGGVYPNKINRKTIKLNISLNGISIKTEFLVVKKFSHPAAISFTTLYDNNIEISSSKHTLSQMNKVSNIVKEPELPDIYKEFKDITAETNTEKLPKPIKGLEFEVELTQENYRLPIRNYPLPPGKMQAMNDEINQGLKSGIIRESKAINACPVMFVPKKEGTLRMVVDYKPLNKYVKPNIYPLPLIEQLLAKIQGSTIFTKLDLKSAYHLIRVRKGDEHKLAFRCPRGVFEYLVMPYGISTAPAHFQYFINTILGEAKESHVVCYMDDILIHSKSESEHVKHVKDVLQKLKNANLIINQAKCEFHQSQVKFIGYHISEKGFTPCQENIDKVLQWKQPKNRKELRQFLGSVNYLRKFIPKTSQLTHPLNNLLKKDVRWKWTPTQTQAIENIKQCLVSPPVLRHFDFSKKILLETDASDVAVGAVLSQKHDDDKYYPVGYYSAKMSKAQLNYSVSDKEMLAIIKSLKHWRHYLESTIEPFKILTDHRNLIGRITNESEPENKRLARWQLFLQDFNFEINYRPGSANHIADALSRIVDETEPIPKDSEDNSINFVNQISITDDFKNQVVTEYTNDTKLLNLLNNEDKRVEENIQLKDGLLINSKDQILLPNDTQLTRTIIKKYHEEGKLIHPGIELLTNIILRRFTWKGIRKQIQEYVQNCHTCQINKSRNHKPYGPLQPIPPSERPWESLSMDFITALPESSGYNALFVVVDRFSKMAILVPCTKSITAEQTARMFDQRVIAYFGNPKEIIADNDHIFTSQTWKDFAHKYNFVMKFSLPYRPQTDGQTERTNQTVEKLLRCVCSTHPNTWVDHISLVQQSYNNAIHSATQMTPFEIVHRYSPALSPLELPSFSDKTDENSQETIQVFQTVKEHLNTNNIKMKKYFDMKIQEIEEFQPGDLVMVKRTKTGFLHKSNKLAPSFAGPFYVLQKSGPNNYELDLPDSIKHMFSSTFHVSHLEKYRHNSELNYATIDESDIGTILHILEHKNREQVLYLNVKYISNLNPSTIMSGWTTLATALQADKAIVNDYIKNNNLNI</sequence>
<feature type="chain" id="PRO_0000424426" description="Transposon Tf2-4 polyprotein">
    <location>
        <begin position="1"/>
        <end position="1333"/>
    </location>
</feature>
<feature type="domain" description="Peptidase A2">
    <location>
        <begin position="266"/>
        <end position="342"/>
    </location>
</feature>
<feature type="domain" description="Reverse transcriptase" evidence="2">
    <location>
        <begin position="436"/>
        <end position="615"/>
    </location>
</feature>
<feature type="domain" description="Integrase catalytic" evidence="3">
    <location>
        <begin position="979"/>
        <end position="1138"/>
    </location>
</feature>
<feature type="region of interest" description="Disordered" evidence="5">
    <location>
        <begin position="209"/>
        <end position="229"/>
    </location>
</feature>
<feature type="compositionally biased region" description="Polar residues" evidence="5">
    <location>
        <begin position="218"/>
        <end position="229"/>
    </location>
</feature>
<feature type="active site" description="For protease activity" evidence="4">
    <location>
        <position position="271"/>
    </location>
</feature>
<feature type="binding site" evidence="1">
    <location>
        <position position="502"/>
    </location>
    <ligand>
        <name>Mg(2+)</name>
        <dbReference type="ChEBI" id="CHEBI:18420"/>
        <label>1</label>
        <note>catalytic; for reverse transcriptase activity</note>
    </ligand>
</feature>
<feature type="binding site" evidence="1">
    <location>
        <position position="566"/>
    </location>
    <ligand>
        <name>Mg(2+)</name>
        <dbReference type="ChEBI" id="CHEBI:18420"/>
        <label>1</label>
        <note>catalytic; for reverse transcriptase activity</note>
    </ligand>
</feature>
<feature type="binding site" evidence="1">
    <location>
        <position position="567"/>
    </location>
    <ligand>
        <name>Mg(2+)</name>
        <dbReference type="ChEBI" id="CHEBI:18420"/>
        <label>1</label>
        <note>catalytic; for reverse transcriptase activity</note>
    </ligand>
</feature>
<feature type="binding site" evidence="1">
    <location>
        <position position="990"/>
    </location>
    <ligand>
        <name>Mg(2+)</name>
        <dbReference type="ChEBI" id="CHEBI:18420"/>
        <label>2</label>
        <note>catalytic; for integrase activity</note>
    </ligand>
</feature>
<feature type="binding site" evidence="1">
    <location>
        <position position="1050"/>
    </location>
    <ligand>
        <name>Mg(2+)</name>
        <dbReference type="ChEBI" id="CHEBI:18420"/>
        <label>2</label>
        <note>catalytic; for integrase activity</note>
    </ligand>
</feature>
<proteinExistence type="inferred from homology"/>
<organism>
    <name type="scientific">Schizosaccharomyces pombe (strain 972 / ATCC 24843)</name>
    <name type="common">Fission yeast</name>
    <dbReference type="NCBI Taxonomy" id="284812"/>
    <lineage>
        <taxon>Eukaryota</taxon>
        <taxon>Fungi</taxon>
        <taxon>Dikarya</taxon>
        <taxon>Ascomycota</taxon>
        <taxon>Taphrinomycotina</taxon>
        <taxon>Schizosaccharomycetes</taxon>
        <taxon>Schizosaccharomycetales</taxon>
        <taxon>Schizosaccharomycetaceae</taxon>
        <taxon>Schizosaccharomyces</taxon>
    </lineage>
</organism>
<gene>
    <name type="primary">Tf2-4</name>
    <name type="ORF">SPAC26A3.13c</name>
</gene>
<protein>
    <recommendedName>
        <fullName>Transposon Tf2-4 polyprotein</fullName>
    </recommendedName>
    <alternativeName>
        <fullName>Retrotransposable element Tf2 155 kDa protein</fullName>
    </alternativeName>
</protein>
<evidence type="ECO:0000250" key="1"/>
<evidence type="ECO:0000255" key="2">
    <source>
        <dbReference type="PROSITE-ProRule" id="PRU00405"/>
    </source>
</evidence>
<evidence type="ECO:0000255" key="3">
    <source>
        <dbReference type="PROSITE-ProRule" id="PRU00457"/>
    </source>
</evidence>
<evidence type="ECO:0000255" key="4">
    <source>
        <dbReference type="PROSITE-ProRule" id="PRU10094"/>
    </source>
</evidence>
<evidence type="ECO:0000256" key="5">
    <source>
        <dbReference type="SAM" id="MobiDB-lite"/>
    </source>
</evidence>
<accession>P0CT37</accession>
<accession>Q05654</accession>
<accession>Q96TJ6</accession>
<name>TF24_SCHPO</name>
<dbReference type="EMBL" id="CU329670">
    <property type="protein sequence ID" value="CAA93236.1"/>
    <property type="molecule type" value="Genomic_DNA"/>
</dbReference>
<dbReference type="PIR" id="T38401">
    <property type="entry name" value="T38401"/>
</dbReference>
<dbReference type="RefSeq" id="NP_594156.1">
    <property type="nucleotide sequence ID" value="NM_001019580.1"/>
</dbReference>
<dbReference type="SMR" id="P0CT37"/>
<dbReference type="FunCoup" id="P0CT37">
    <property type="interactions" value="2"/>
</dbReference>
<dbReference type="STRING" id="284812.P0CT37"/>
<dbReference type="MEROPS" id="A02.051"/>
<dbReference type="EnsemblFungi" id="SPAC167.08.1">
    <property type="protein sequence ID" value="SPAC167.08.1:pep"/>
    <property type="gene ID" value="SPAC167.08"/>
</dbReference>
<dbReference type="EnsemblFungi" id="SPAC26A3.13c.1">
    <property type="protein sequence ID" value="SPAC26A3.13c.1:pep"/>
    <property type="gene ID" value="SPAC26A3.13c"/>
</dbReference>
<dbReference type="EnsemblFungi" id="SPAC9.04.1">
    <property type="protein sequence ID" value="SPAC9.04.1:pep"/>
    <property type="gene ID" value="SPAC9.04"/>
</dbReference>
<dbReference type="EnsemblFungi" id="SPBC9B6.02c.1">
    <property type="protein sequence ID" value="SPBC9B6.02c.1:pep"/>
    <property type="gene ID" value="SPBC9B6.02c"/>
</dbReference>
<dbReference type="GeneID" id="2542672"/>
<dbReference type="KEGG" id="spo:2542672"/>
<dbReference type="KEGG" id="spo:2542797"/>
<dbReference type="KEGG" id="spo:2543673"/>
<dbReference type="KEGG" id="spo:3361218"/>
<dbReference type="PomBase" id="SPAC26A3.13c">
    <property type="gene designation" value="Tf2-4"/>
</dbReference>
<dbReference type="VEuPathDB" id="FungiDB:SPAC167.08"/>
<dbReference type="VEuPathDB" id="FungiDB:SPAC26A3.13c"/>
<dbReference type="VEuPathDB" id="FungiDB:SPAC9.04"/>
<dbReference type="VEuPathDB" id="FungiDB:SPBC9B6.02c"/>
<dbReference type="HOGENOM" id="CLU_000384_4_0_1"/>
<dbReference type="InParanoid" id="P0CT37"/>
<dbReference type="PhylomeDB" id="P0CT37"/>
<dbReference type="PRO" id="PR:P0CT37"/>
<dbReference type="Proteomes" id="UP000002485">
    <property type="component" value="Chromosome I"/>
</dbReference>
<dbReference type="GO" id="GO:0005634">
    <property type="term" value="C:nucleus"/>
    <property type="evidence" value="ECO:0007669"/>
    <property type="project" value="UniProtKB-ARBA"/>
</dbReference>
<dbReference type="GO" id="GO:0004190">
    <property type="term" value="F:aspartic-type endopeptidase activity"/>
    <property type="evidence" value="ECO:0007669"/>
    <property type="project" value="UniProtKB-KW"/>
</dbReference>
<dbReference type="GO" id="GO:0003677">
    <property type="term" value="F:DNA binding"/>
    <property type="evidence" value="ECO:0007669"/>
    <property type="project" value="UniProtKB-KW"/>
</dbReference>
<dbReference type="GO" id="GO:0003887">
    <property type="term" value="F:DNA-directed DNA polymerase activity"/>
    <property type="evidence" value="ECO:0007669"/>
    <property type="project" value="UniProtKB-KW"/>
</dbReference>
<dbReference type="GO" id="GO:0004519">
    <property type="term" value="F:endonuclease activity"/>
    <property type="evidence" value="ECO:0007669"/>
    <property type="project" value="UniProtKB-KW"/>
</dbReference>
<dbReference type="GO" id="GO:0046872">
    <property type="term" value="F:metal ion binding"/>
    <property type="evidence" value="ECO:0007669"/>
    <property type="project" value="UniProtKB-KW"/>
</dbReference>
<dbReference type="GO" id="GO:0003723">
    <property type="term" value="F:RNA binding"/>
    <property type="evidence" value="ECO:0007669"/>
    <property type="project" value="UniProtKB-KW"/>
</dbReference>
<dbReference type="GO" id="GO:0003964">
    <property type="term" value="F:RNA-directed DNA polymerase activity"/>
    <property type="evidence" value="ECO:0007669"/>
    <property type="project" value="UniProtKB-KW"/>
</dbReference>
<dbReference type="GO" id="GO:0015074">
    <property type="term" value="P:DNA integration"/>
    <property type="evidence" value="ECO:0007669"/>
    <property type="project" value="UniProtKB-KW"/>
</dbReference>
<dbReference type="GO" id="GO:0006310">
    <property type="term" value="P:DNA recombination"/>
    <property type="evidence" value="ECO:0007669"/>
    <property type="project" value="UniProtKB-KW"/>
</dbReference>
<dbReference type="GO" id="GO:0006508">
    <property type="term" value="P:proteolysis"/>
    <property type="evidence" value="ECO:0007669"/>
    <property type="project" value="UniProtKB-KW"/>
</dbReference>
<dbReference type="CDD" id="cd00303">
    <property type="entry name" value="retropepsin_like"/>
    <property type="match status" value="1"/>
</dbReference>
<dbReference type="CDD" id="cd09274">
    <property type="entry name" value="RNase_HI_RT_Ty3"/>
    <property type="match status" value="1"/>
</dbReference>
<dbReference type="CDD" id="cd01647">
    <property type="entry name" value="RT_LTR"/>
    <property type="match status" value="1"/>
</dbReference>
<dbReference type="FunFam" id="3.10.20.370:FF:000003">
    <property type="entry name" value="Transposon Tf2-6 polyprotein"/>
    <property type="match status" value="1"/>
</dbReference>
<dbReference type="FunFam" id="3.30.70.270:FF:000045">
    <property type="entry name" value="Transposon Tf2-7 polyprotein"/>
    <property type="match status" value="1"/>
</dbReference>
<dbReference type="Gene3D" id="1.10.340.70">
    <property type="match status" value="1"/>
</dbReference>
<dbReference type="Gene3D" id="3.10.20.370">
    <property type="match status" value="1"/>
</dbReference>
<dbReference type="Gene3D" id="3.30.70.270">
    <property type="match status" value="2"/>
</dbReference>
<dbReference type="Gene3D" id="2.40.70.10">
    <property type="entry name" value="Acid Proteases"/>
    <property type="match status" value="1"/>
</dbReference>
<dbReference type="Gene3D" id="3.10.10.10">
    <property type="entry name" value="HIV Type 1 Reverse Transcriptase, subunit A, domain 1"/>
    <property type="match status" value="1"/>
</dbReference>
<dbReference type="Gene3D" id="3.30.420.10">
    <property type="entry name" value="Ribonuclease H-like superfamily/Ribonuclease H"/>
    <property type="match status" value="1"/>
</dbReference>
<dbReference type="InterPro" id="IPR001969">
    <property type="entry name" value="Aspartic_peptidase_AS"/>
</dbReference>
<dbReference type="InterPro" id="IPR043502">
    <property type="entry name" value="DNA/RNA_pol_sf"/>
</dbReference>
<dbReference type="InterPro" id="IPR001584">
    <property type="entry name" value="Integrase_cat-core"/>
</dbReference>
<dbReference type="InterPro" id="IPR041588">
    <property type="entry name" value="Integrase_H2C2"/>
</dbReference>
<dbReference type="InterPro" id="IPR021109">
    <property type="entry name" value="Peptidase_aspartic_dom_sf"/>
</dbReference>
<dbReference type="InterPro" id="IPR050951">
    <property type="entry name" value="Retrovirus_Pol_polyprotein"/>
</dbReference>
<dbReference type="InterPro" id="IPR043128">
    <property type="entry name" value="Rev_trsase/Diguanyl_cyclase"/>
</dbReference>
<dbReference type="InterPro" id="IPR012337">
    <property type="entry name" value="RNaseH-like_sf"/>
</dbReference>
<dbReference type="InterPro" id="IPR036397">
    <property type="entry name" value="RNaseH_sf"/>
</dbReference>
<dbReference type="InterPro" id="IPR000477">
    <property type="entry name" value="RT_dom"/>
</dbReference>
<dbReference type="InterPro" id="IPR041577">
    <property type="entry name" value="RT_RNaseH_2"/>
</dbReference>
<dbReference type="InterPro" id="IPR056924">
    <property type="entry name" value="SH3_Tf2-1"/>
</dbReference>
<dbReference type="InterPro" id="IPR056930">
    <property type="entry name" value="Tf2-1-like_C"/>
</dbReference>
<dbReference type="InterPro" id="IPR024648">
    <property type="entry name" value="Tf2-1-like_dom"/>
</dbReference>
<dbReference type="PANTHER" id="PTHR37984">
    <property type="entry name" value="PROTEIN CBG26694"/>
    <property type="match status" value="1"/>
</dbReference>
<dbReference type="PANTHER" id="PTHR37984:SF5">
    <property type="entry name" value="PROTEIN NYNRIN-LIKE"/>
    <property type="match status" value="1"/>
</dbReference>
<dbReference type="Pfam" id="PF17921">
    <property type="entry name" value="Integrase_H2C2"/>
    <property type="match status" value="1"/>
</dbReference>
<dbReference type="Pfam" id="PF12382">
    <property type="entry name" value="Peptidase_A2_2"/>
    <property type="match status" value="1"/>
</dbReference>
<dbReference type="Pfam" id="PF17919">
    <property type="entry name" value="RT_RNaseH_2"/>
    <property type="match status" value="1"/>
</dbReference>
<dbReference type="Pfam" id="PF00665">
    <property type="entry name" value="rve"/>
    <property type="match status" value="1"/>
</dbReference>
<dbReference type="Pfam" id="PF00078">
    <property type="entry name" value="RVT_1"/>
    <property type="match status" value="1"/>
</dbReference>
<dbReference type="Pfam" id="PF24626">
    <property type="entry name" value="SH3_Tf2-1"/>
    <property type="match status" value="1"/>
</dbReference>
<dbReference type="Pfam" id="PF24614">
    <property type="entry name" value="Tf2-1_C"/>
    <property type="match status" value="1"/>
</dbReference>
<dbReference type="SUPFAM" id="SSF50630">
    <property type="entry name" value="Acid proteases"/>
    <property type="match status" value="1"/>
</dbReference>
<dbReference type="SUPFAM" id="SSF56672">
    <property type="entry name" value="DNA/RNA polymerases"/>
    <property type="match status" value="1"/>
</dbReference>
<dbReference type="SUPFAM" id="SSF53098">
    <property type="entry name" value="Ribonuclease H-like"/>
    <property type="match status" value="1"/>
</dbReference>
<dbReference type="PROSITE" id="PS00141">
    <property type="entry name" value="ASP_PROTEASE"/>
    <property type="match status" value="1"/>
</dbReference>
<dbReference type="PROSITE" id="PS50994">
    <property type="entry name" value="INTEGRASE"/>
    <property type="match status" value="1"/>
</dbReference>
<dbReference type="PROSITE" id="PS50878">
    <property type="entry name" value="RT_POL"/>
    <property type="match status" value="1"/>
</dbReference>
<keyword id="KW-0064">Aspartyl protease</keyword>
<keyword id="KW-0229">DNA integration</keyword>
<keyword id="KW-0233">DNA recombination</keyword>
<keyword id="KW-0238">DNA-binding</keyword>
<keyword id="KW-0239">DNA-directed DNA polymerase</keyword>
<keyword id="KW-0255">Endonuclease</keyword>
<keyword id="KW-0378">Hydrolase</keyword>
<keyword id="KW-0460">Magnesium</keyword>
<keyword id="KW-0479">Metal-binding</keyword>
<keyword id="KW-0511">Multifunctional enzyme</keyword>
<keyword id="KW-0540">Nuclease</keyword>
<keyword id="KW-0548">Nucleotidyltransferase</keyword>
<keyword id="KW-0645">Protease</keyword>
<keyword id="KW-1185">Reference proteome</keyword>
<keyword id="KW-0694">RNA-binding</keyword>
<keyword id="KW-0695">RNA-directed DNA polymerase</keyword>
<keyword id="KW-0808">Transferase</keyword>
<keyword id="KW-0814">Transposable element</keyword>